<comment type="function">
    <text evidence="2 4 6">Subunit of the V0 complex of vacuolar(H+)-ATPase (V-ATPase), a multisubunit enzyme composed of a peripheral complex (V1) that hydrolyzes ATP and a membrane integral complex (V0) that translocates protons (PubMed:32764564). V-ATPase is responsible for the acidification of various organelles, such as lysosomes, endosomes, the trans-Golgi network, and secretory granules, including synaptic vesicles. In certain cell types, can be exported to the plasma membrane, where it is involved in the acidification of the extracellular environment (PubMed:32764564). Required for assembly and activity of the vacuolar ATPase (By similarity). Through its action on compartment acidification, plays an essential role in neuronal development in terms of integrity and connectivity of neurons (By similarity).</text>
</comment>
<comment type="subunit">
    <text evidence="3 6">V-ATPase is a heteromultimeric enzyme made up of two complexes: the ATP-hydrolytic V1 complex and the proton translocation V0 complex (PubMed:32764564). The V1 complex consists of three catalytic AB heterodimers that form a heterohexamer, three peripheral stalks each consisting of EG heterodimers, one central rotor including subunits D and F, and the regulatory subunits C and H (PubMed:32764564). The proton translocation complex V0 consists of the proton transport subunit a, a ring of proteolipid subunits c9c'', rotary subunit d, subunits e and f, and the accessory subunits ATP6AP1/Ac45 and ATP6AP2/PRR (PubMed:32764564). Interacts with SPAAR (By similarity).</text>
</comment>
<comment type="subcellular location">
    <subcellularLocation>
        <location evidence="6">Cytoplasmic vesicle</location>
        <location evidence="6">Clathrin-coated vesicle membrane</location>
        <topology evidence="5">Multi-pass membrane protein</topology>
    </subcellularLocation>
    <subcellularLocation>
        <location evidence="1">Cytoplasmic vesicle</location>
        <location evidence="1">Secretory vesicle</location>
        <location evidence="1">Synaptic vesicle membrane</location>
        <topology evidence="5">Multi-pass membrane protein</topology>
    </subcellularLocation>
    <subcellularLocation>
        <location evidence="3">Melanosome</location>
    </subcellularLocation>
</comment>
<comment type="alternative products">
    <event type="alternative splicing"/>
    <isoform>
        <id>Q29466-1</id>
        <name>1</name>
        <name>I</name>
        <sequence type="displayed"/>
    </isoform>
    <isoform>
        <id>Q29466-2</id>
        <name>2</name>
        <name>II</name>
        <sequence type="described" ref="VSP_000341"/>
    </isoform>
</comment>
<comment type="tissue specificity">
    <molecule>Isoform 1</molecule>
    <text evidence="6 7">Expressed in brain (at protein level).</text>
</comment>
<comment type="tissue specificity">
    <molecule>Isoform 2</molecule>
    <text evidence="7">Expressed heart, kidney, liver, spleen, and to a lesser extent in brain.</text>
</comment>
<comment type="similarity">
    <text evidence="9">Belongs to the V-ATPase 116 kDa subunit family.</text>
</comment>
<feature type="chain" id="PRO_0000119210" description="V-type proton ATPase 116 kDa subunit a 1">
    <location>
        <begin position="1"/>
        <end position="838"/>
    </location>
</feature>
<feature type="topological domain" description="Cytoplasmic" evidence="5">
    <location>
        <begin position="1"/>
        <end position="388"/>
    </location>
</feature>
<feature type="transmembrane region" description="Helical" evidence="5">
    <location>
        <begin position="389"/>
        <end position="407"/>
    </location>
</feature>
<feature type="topological domain" description="Vacuolar" evidence="5">
    <location>
        <begin position="408"/>
        <end position="409"/>
    </location>
</feature>
<feature type="transmembrane region" description="Helical" evidence="5">
    <location>
        <begin position="410"/>
        <end position="426"/>
    </location>
</feature>
<feature type="topological domain" description="Cytoplasmic" evidence="5">
    <location>
        <begin position="427"/>
        <end position="441"/>
    </location>
</feature>
<feature type="transmembrane region" description="Helical" evidence="5">
    <location>
        <begin position="442"/>
        <end position="471"/>
    </location>
</feature>
<feature type="topological domain" description="Vacuolar" evidence="5">
    <location>
        <begin position="472"/>
        <end position="535"/>
    </location>
</feature>
<feature type="transmembrane region" description="Helical" evidence="5">
    <location>
        <begin position="536"/>
        <end position="555"/>
    </location>
</feature>
<feature type="topological domain" description="Cytoplasmic" evidence="5">
    <location>
        <begin position="556"/>
        <end position="573"/>
    </location>
</feature>
<feature type="transmembrane region" description="Helical" evidence="5">
    <location>
        <begin position="574"/>
        <end position="594"/>
    </location>
</feature>
<feature type="topological domain" description="Vacuolar" evidence="5">
    <location>
        <begin position="595"/>
        <end position="639"/>
    </location>
</feature>
<feature type="transmembrane region" description="Helical" evidence="5">
    <location>
        <begin position="640"/>
        <end position="659"/>
    </location>
</feature>
<feature type="topological domain" description="Cytoplasmic" evidence="5">
    <location>
        <begin position="660"/>
        <end position="725"/>
    </location>
</feature>
<feature type="transmembrane region" description="Helical" evidence="5">
    <location>
        <begin position="726"/>
        <end position="750"/>
    </location>
</feature>
<feature type="topological domain" description="Vacuolar" evidence="5">
    <location>
        <begin position="751"/>
        <end position="771"/>
    </location>
</feature>
<feature type="transmembrane region" description="Helical" evidence="5">
    <location>
        <begin position="772"/>
        <end position="810"/>
    </location>
</feature>
<feature type="topological domain" description="Cytoplasmic" evidence="5">
    <location>
        <begin position="811"/>
        <end position="838"/>
    </location>
</feature>
<feature type="modified residue" description="Phosphothreonine" evidence="4">
    <location>
        <position position="250"/>
    </location>
</feature>
<feature type="modified residue" description="Phosphothreonine" evidence="3">
    <location>
        <position position="360"/>
    </location>
</feature>
<feature type="modified residue" description="Phosphotyrosine" evidence="4">
    <location>
        <position position="364"/>
    </location>
</feature>
<feature type="splice variant" id="VSP_000341" description="In isoform 2." evidence="8">
    <location>
        <begin position="706"/>
        <end position="711"/>
    </location>
</feature>
<feature type="strand" evidence="12">
    <location>
        <begin position="13"/>
        <end position="19"/>
    </location>
</feature>
<feature type="helix" evidence="12">
    <location>
        <begin position="24"/>
        <end position="32"/>
    </location>
</feature>
<feature type="strand" evidence="12">
    <location>
        <begin position="49"/>
        <end position="51"/>
    </location>
</feature>
<feature type="helix" evidence="12">
    <location>
        <begin position="54"/>
        <end position="74"/>
    </location>
</feature>
<feature type="turn" evidence="12">
    <location>
        <begin position="91"/>
        <end position="93"/>
    </location>
</feature>
<feature type="helix" evidence="12">
    <location>
        <begin position="94"/>
        <end position="114"/>
    </location>
</feature>
<feature type="helix" evidence="12">
    <location>
        <begin position="116"/>
        <end position="139"/>
    </location>
</feature>
<feature type="strand" evidence="12">
    <location>
        <begin position="172"/>
        <end position="176"/>
    </location>
</feature>
<feature type="helix" evidence="12">
    <location>
        <begin position="177"/>
        <end position="179"/>
    </location>
</feature>
<feature type="helix" evidence="12">
    <location>
        <begin position="180"/>
        <end position="191"/>
    </location>
</feature>
<feature type="strand" evidence="12">
    <location>
        <begin position="209"/>
        <end position="211"/>
    </location>
</feature>
<feature type="strand" evidence="12">
    <location>
        <begin position="217"/>
        <end position="222"/>
    </location>
</feature>
<feature type="helix" evidence="12">
    <location>
        <begin position="231"/>
        <end position="239"/>
    </location>
</feature>
<feature type="strand" evidence="12">
    <location>
        <begin position="243"/>
        <end position="245"/>
    </location>
</feature>
<feature type="turn" evidence="12">
    <location>
        <begin position="251"/>
        <end position="253"/>
    </location>
</feature>
<feature type="helix" evidence="12">
    <location>
        <begin position="254"/>
        <end position="287"/>
    </location>
</feature>
<feature type="helix" evidence="12">
    <location>
        <begin position="290"/>
        <end position="308"/>
    </location>
</feature>
<feature type="strand" evidence="12">
    <location>
        <begin position="315"/>
        <end position="324"/>
    </location>
</feature>
<feature type="helix" evidence="12">
    <location>
        <begin position="330"/>
        <end position="340"/>
    </location>
</feature>
<feature type="turn" evidence="12">
    <location>
        <begin position="341"/>
        <end position="345"/>
    </location>
</feature>
<feature type="strand" evidence="12">
    <location>
        <begin position="351"/>
        <end position="354"/>
    </location>
</feature>
<feature type="helix" evidence="12">
    <location>
        <begin position="372"/>
        <end position="381"/>
    </location>
</feature>
<feature type="helix" evidence="12">
    <location>
        <begin position="392"/>
        <end position="406"/>
    </location>
</feature>
<feature type="helix" evidence="12">
    <location>
        <begin position="410"/>
        <end position="425"/>
    </location>
</feature>
<feature type="helix" evidence="12">
    <location>
        <begin position="427"/>
        <end position="432"/>
    </location>
</feature>
<feature type="helix" evidence="12">
    <location>
        <begin position="438"/>
        <end position="445"/>
    </location>
</feature>
<feature type="turn" evidence="12">
    <location>
        <begin position="446"/>
        <end position="448"/>
    </location>
</feature>
<feature type="helix" evidence="12">
    <location>
        <begin position="449"/>
        <end position="463"/>
    </location>
</feature>
<feature type="helix" evidence="12">
    <location>
        <begin position="482"/>
        <end position="488"/>
    </location>
</feature>
<feature type="helix" evidence="12">
    <location>
        <begin position="492"/>
        <end position="495"/>
    </location>
</feature>
<feature type="strand" evidence="12">
    <location>
        <begin position="496"/>
        <end position="498"/>
    </location>
</feature>
<feature type="turn" evidence="12">
    <location>
        <begin position="507"/>
        <end position="510"/>
    </location>
</feature>
<feature type="strand" evidence="12">
    <location>
        <begin position="516"/>
        <end position="518"/>
    </location>
</feature>
<feature type="helix" evidence="12">
    <location>
        <begin position="522"/>
        <end position="525"/>
    </location>
</feature>
<feature type="strand" evidence="12">
    <location>
        <begin position="526"/>
        <end position="528"/>
    </location>
</feature>
<feature type="helix" evidence="12">
    <location>
        <begin position="529"/>
        <end position="558"/>
    </location>
</feature>
<feature type="turn" evidence="12">
    <location>
        <begin position="559"/>
        <end position="564"/>
    </location>
</feature>
<feature type="helix" evidence="12">
    <location>
        <begin position="566"/>
        <end position="572"/>
    </location>
</feature>
<feature type="helix" evidence="12">
    <location>
        <begin position="574"/>
        <end position="583"/>
    </location>
</feature>
<feature type="helix" evidence="12">
    <location>
        <begin position="585"/>
        <end position="597"/>
    </location>
</feature>
<feature type="strand" evidence="12">
    <location>
        <begin position="600"/>
        <end position="602"/>
    </location>
</feature>
<feature type="helix" evidence="12">
    <location>
        <begin position="609"/>
        <end position="617"/>
    </location>
</feature>
<feature type="strand" evidence="12">
    <location>
        <begin position="624"/>
        <end position="626"/>
    </location>
</feature>
<feature type="helix" evidence="12">
    <location>
        <begin position="633"/>
        <end position="645"/>
    </location>
</feature>
<feature type="helix" evidence="12">
    <location>
        <begin position="647"/>
        <end position="654"/>
    </location>
</feature>
<feature type="helix" evidence="12">
    <location>
        <begin position="715"/>
        <end position="729"/>
    </location>
</feature>
<feature type="helix" evidence="12">
    <location>
        <begin position="731"/>
        <end position="737"/>
    </location>
</feature>
<feature type="helix" evidence="12">
    <location>
        <begin position="738"/>
        <end position="740"/>
    </location>
</feature>
<feature type="helix" evidence="12">
    <location>
        <begin position="741"/>
        <end position="758"/>
    </location>
</feature>
<feature type="turn" evidence="12">
    <location>
        <begin position="759"/>
        <end position="761"/>
    </location>
</feature>
<feature type="helix" evidence="12">
    <location>
        <begin position="762"/>
        <end position="765"/>
    </location>
</feature>
<feature type="strand" evidence="12">
    <location>
        <begin position="768"/>
        <end position="770"/>
    </location>
</feature>
<feature type="helix" evidence="12">
    <location>
        <begin position="774"/>
        <end position="789"/>
    </location>
</feature>
<feature type="turn" evidence="12">
    <location>
        <begin position="790"/>
        <end position="792"/>
    </location>
</feature>
<feature type="helix" evidence="12">
    <location>
        <begin position="793"/>
        <end position="808"/>
    </location>
</feature>
<feature type="turn" evidence="12">
    <location>
        <begin position="809"/>
        <end position="814"/>
    </location>
</feature>
<organism>
    <name type="scientific">Bos taurus</name>
    <name type="common">Bovine</name>
    <dbReference type="NCBI Taxonomy" id="9913"/>
    <lineage>
        <taxon>Eukaryota</taxon>
        <taxon>Metazoa</taxon>
        <taxon>Chordata</taxon>
        <taxon>Craniata</taxon>
        <taxon>Vertebrata</taxon>
        <taxon>Euteleostomi</taxon>
        <taxon>Mammalia</taxon>
        <taxon>Eutheria</taxon>
        <taxon>Laurasiatheria</taxon>
        <taxon>Artiodactyla</taxon>
        <taxon>Ruminantia</taxon>
        <taxon>Pecora</taxon>
        <taxon>Bovidae</taxon>
        <taxon>Bovinae</taxon>
        <taxon>Bos</taxon>
    </lineage>
</organism>
<keyword id="KW-0002">3D-structure</keyword>
<keyword id="KW-0025">Alternative splicing</keyword>
<keyword id="KW-0968">Cytoplasmic vesicle</keyword>
<keyword id="KW-0375">Hydrogen ion transport</keyword>
<keyword id="KW-0406">Ion transport</keyword>
<keyword id="KW-0472">Membrane</keyword>
<keyword id="KW-0597">Phosphoprotein</keyword>
<keyword id="KW-1185">Reference proteome</keyword>
<keyword id="KW-0770">Synapse</keyword>
<keyword id="KW-0812">Transmembrane</keyword>
<keyword id="KW-1133">Transmembrane helix</keyword>
<keyword id="KW-0813">Transport</keyword>
<protein>
    <recommendedName>
        <fullName>V-type proton ATPase 116 kDa subunit a 1</fullName>
        <shortName>V-ATPase 116 kDa subunit a 1</shortName>
    </recommendedName>
    <alternativeName>
        <fullName>Clathrin-coated vesicle/synaptic vesicle proton pump 116 kDa subunit</fullName>
    </alternativeName>
    <alternativeName>
        <fullName>Vacuolar adenosine triphosphatase subunit Ac116</fullName>
    </alternativeName>
    <alternativeName>
        <fullName>Vacuolar proton pump subunit 1</fullName>
    </alternativeName>
    <alternativeName>
        <fullName>Vacuolar proton translocating ATPase 116 kDa subunit a isoform 1</fullName>
    </alternativeName>
</protein>
<reference key="1">
    <citation type="journal article" date="1994" name="J. Biol. Chem.">
        <title>Alternative mRNA splicing generates tissue-specific isoforms of 116-kDa polypeptide of vacuolar proton pump.</title>
        <authorList>
            <person name="Peng S.-B."/>
            <person name="Crider B.P."/>
            <person name="Xie X.-S."/>
            <person name="Stone D.K."/>
        </authorList>
    </citation>
    <scope>NUCLEOTIDE SEQUENCE [MRNA] (ISOFORMS 1 AND 2)</scope>
    <scope>TISSUE SPECIFICITY</scope>
    <source>
        <tissue>Brain</tissue>
    </source>
</reference>
<reference evidence="10 11" key="2">
    <citation type="journal article" date="2020" name="Nat. Commun.">
        <title>Cryo-EM structures of intact V-ATPase from bovine brain.</title>
        <authorList>
            <person name="Wang R."/>
            <person name="Long T."/>
            <person name="Hassan A."/>
            <person name="Wang J."/>
            <person name="Sun Y."/>
            <person name="Xie X.S."/>
            <person name="Li X."/>
        </authorList>
    </citation>
    <scope>STRUCTURE BY ELECTRON MICROSCOPY (3.37 ANGSTROMS)</scope>
    <scope>FUNCTION</scope>
    <scope>IDENTIFICATION IN THE V-ATPASE COMPLEX</scope>
    <scope>SUBCELLULAR LOCATION</scope>
    <scope>IDENTIFICATION BY MASS SPECTROMETRY</scope>
    <scope>TISSUE SPECIFICITY</scope>
</reference>
<gene>
    <name type="primary">ATP6V0A1</name>
    <name type="synonym">ATP6N1</name>
    <name type="synonym">VPP1</name>
</gene>
<sequence length="838" mass="96302">MGELFRSEEMTLAQLFLQSEAAYCCVSELGELGKVQFRDLNPDVNVFQRKFVNEVRRCEEMDRKLRFVEKEIRKANIPIMDTGENPEVPFPRDMIDLEANFEKIENELKEINTNQEALKRNFLELTELKFILRKTQQFFDEMADPDLLEESSSLLEPSEMGRGTPLRLGFVAGVINRERIPTFERMLWRVCRGNVFLRQAEIENPLEDPVTGDYVHKSVFIIFFQGDQLKNRVKKICEGFRASLYPCPETPQERKEMASGVNTRIDDLQMVLNQTEDHRQRVLQAAAKNIRVWFIKVRKMKAIYHTLNLCNIDVTQKCLIAEVWCPVTDLDSIQFALRRGTEHSGSTVPSILNRMQTNQTPPTYNKTNKFTYGFQNIVDAYGIGTYREINPAPYTIITFPFLFAVMFGDLGHGILMTLFAVWMVLKESRILSQKNENEMFSTIFSGRYIILLMGVFSIYTGLIYNDCFSKSLNIFGSSWSVRPMFDIYNWTEETLRGNPVLQLNPAVTGVFGGPYPFGIDPIWNIATNKLTFLNSFKMKMSVILGIIHMLFGVSLSLFNHTYFKKPLNIYFGFIPEIIFMTSLFGYLVILIFYKWTAYNAKTSEKAPSLLIHFINMFLFSYGDSGNSMLYSGQKGIQCFLVVVALLCVPWMLLFKPLVLRRQYLRRKHLGTLNFGGIRVGNGPTEEDAEIIQHDQLSTHSEDAEEPTEDEVFDFGDTMVHQAIHTIEYCLGCISNTASYLRLWALSLAHAQLSEVLWTMVIHIGLKVKSLAGGLALFFIFAAFATLTVAILLIMEGLSAFLHALRLHWVEFQNKFYSGTGFKFLPFSFEHIREGKFDD</sequence>
<dbReference type="EMBL" id="L31770">
    <property type="protein sequence ID" value="AAA21492.1"/>
    <property type="molecule type" value="mRNA"/>
</dbReference>
<dbReference type="PIR" id="A54163">
    <property type="entry name" value="A54163"/>
</dbReference>
<dbReference type="RefSeq" id="NP_777179.1">
    <molecule id="Q29466-1"/>
    <property type="nucleotide sequence ID" value="NM_174754.2"/>
</dbReference>
<dbReference type="PDB" id="6XBW">
    <property type="method" value="EM"/>
    <property type="resolution" value="3.37 A"/>
    <property type="chains" value="a=1-838"/>
</dbReference>
<dbReference type="PDB" id="6XBY">
    <property type="method" value="EM"/>
    <property type="resolution" value="3.79 A"/>
    <property type="chains" value="a=1-838"/>
</dbReference>
<dbReference type="PDB" id="7KHR">
    <property type="method" value="EM"/>
    <property type="resolution" value="3.62 A"/>
    <property type="chains" value="a=1-838"/>
</dbReference>
<dbReference type="PDBsum" id="6XBW"/>
<dbReference type="PDBsum" id="6XBY"/>
<dbReference type="PDBsum" id="7KHR"/>
<dbReference type="SMR" id="Q29466"/>
<dbReference type="CORUM" id="Q29466"/>
<dbReference type="FunCoup" id="Q29466">
    <property type="interactions" value="2973"/>
</dbReference>
<dbReference type="STRING" id="9913.ENSBTAP00000057221"/>
<dbReference type="PaxDb" id="9913-ENSBTAP00000025588"/>
<dbReference type="PeptideAtlas" id="Q29466"/>
<dbReference type="GeneID" id="286768"/>
<dbReference type="KEGG" id="bta:286768"/>
<dbReference type="CTD" id="535"/>
<dbReference type="eggNOG" id="KOG2189">
    <property type="taxonomic scope" value="Eukaryota"/>
</dbReference>
<dbReference type="InParanoid" id="Q29466"/>
<dbReference type="OrthoDB" id="10264220at2759"/>
<dbReference type="Proteomes" id="UP000009136">
    <property type="component" value="Unplaced"/>
</dbReference>
<dbReference type="GO" id="GO:0030665">
    <property type="term" value="C:clathrin-coated vesicle membrane"/>
    <property type="evidence" value="ECO:0007669"/>
    <property type="project" value="UniProtKB-SubCell"/>
</dbReference>
<dbReference type="GO" id="GO:0042470">
    <property type="term" value="C:melanosome"/>
    <property type="evidence" value="ECO:0007669"/>
    <property type="project" value="UniProtKB-SubCell"/>
</dbReference>
<dbReference type="GO" id="GO:0005886">
    <property type="term" value="C:plasma membrane"/>
    <property type="evidence" value="ECO:0000318"/>
    <property type="project" value="GO_Central"/>
</dbReference>
<dbReference type="GO" id="GO:0030672">
    <property type="term" value="C:synaptic vesicle membrane"/>
    <property type="evidence" value="ECO:0007669"/>
    <property type="project" value="UniProtKB-SubCell"/>
</dbReference>
<dbReference type="GO" id="GO:0016471">
    <property type="term" value="C:vacuolar proton-transporting V-type ATPase complex"/>
    <property type="evidence" value="ECO:0000318"/>
    <property type="project" value="GO_Central"/>
</dbReference>
<dbReference type="GO" id="GO:0000220">
    <property type="term" value="C:vacuolar proton-transporting V-type ATPase, V0 domain"/>
    <property type="evidence" value="ECO:0000314"/>
    <property type="project" value="UniProtKB"/>
</dbReference>
<dbReference type="GO" id="GO:0051117">
    <property type="term" value="F:ATPase binding"/>
    <property type="evidence" value="ECO:0000318"/>
    <property type="project" value="GO_Central"/>
</dbReference>
<dbReference type="GO" id="GO:0046961">
    <property type="term" value="F:proton-transporting ATPase activity, rotational mechanism"/>
    <property type="evidence" value="ECO:0007669"/>
    <property type="project" value="InterPro"/>
</dbReference>
<dbReference type="GO" id="GO:0045851">
    <property type="term" value="P:pH reduction"/>
    <property type="evidence" value="ECO:0000305"/>
    <property type="project" value="UniProtKB"/>
</dbReference>
<dbReference type="GO" id="GO:1902600">
    <property type="term" value="P:proton transmembrane transport"/>
    <property type="evidence" value="ECO:0000305"/>
    <property type="project" value="UniProtKB"/>
</dbReference>
<dbReference type="GO" id="GO:0007035">
    <property type="term" value="P:vacuolar acidification"/>
    <property type="evidence" value="ECO:0000318"/>
    <property type="project" value="GO_Central"/>
</dbReference>
<dbReference type="InterPro" id="IPR002490">
    <property type="entry name" value="V-ATPase_116kDa_su"/>
</dbReference>
<dbReference type="InterPro" id="IPR026028">
    <property type="entry name" value="V-type_ATPase_116kDa_su_euka"/>
</dbReference>
<dbReference type="PANTHER" id="PTHR11629:SF68">
    <property type="entry name" value="V-TYPE PROTON ATPASE 116 KDA SUBUNIT A 1"/>
    <property type="match status" value="1"/>
</dbReference>
<dbReference type="PANTHER" id="PTHR11629">
    <property type="entry name" value="VACUOLAR PROTON ATPASES"/>
    <property type="match status" value="1"/>
</dbReference>
<dbReference type="Pfam" id="PF01496">
    <property type="entry name" value="V_ATPase_I"/>
    <property type="match status" value="1"/>
</dbReference>
<dbReference type="PIRSF" id="PIRSF001293">
    <property type="entry name" value="ATP6V0A1"/>
    <property type="match status" value="1"/>
</dbReference>
<proteinExistence type="evidence at protein level"/>
<evidence type="ECO:0000250" key="1">
    <source>
        <dbReference type="UniProtKB" id="P25286"/>
    </source>
</evidence>
<evidence type="ECO:0000250" key="2">
    <source>
        <dbReference type="UniProtKB" id="P32563"/>
    </source>
</evidence>
<evidence type="ECO:0000250" key="3">
    <source>
        <dbReference type="UniProtKB" id="Q93050"/>
    </source>
</evidence>
<evidence type="ECO:0000250" key="4">
    <source>
        <dbReference type="UniProtKB" id="Q9Z1G4"/>
    </source>
</evidence>
<evidence type="ECO:0000255" key="5"/>
<evidence type="ECO:0000269" key="6">
    <source>
    </source>
</evidence>
<evidence type="ECO:0000269" key="7">
    <source>
    </source>
</evidence>
<evidence type="ECO:0000303" key="8">
    <source>
    </source>
</evidence>
<evidence type="ECO:0000305" key="9"/>
<evidence type="ECO:0007744" key="10">
    <source>
        <dbReference type="PDB" id="6XBW"/>
    </source>
</evidence>
<evidence type="ECO:0007744" key="11">
    <source>
        <dbReference type="PDB" id="6XBY"/>
    </source>
</evidence>
<evidence type="ECO:0007829" key="12">
    <source>
        <dbReference type="PDB" id="6XBW"/>
    </source>
</evidence>
<accession>Q29466</accession>
<name>VPP1_BOVIN</name>